<sequence>MRMSTTTEIIAHHWAFAVFLIGAVGLCGLMLLGAYFLGGRAQARAKNVPYESGIDSVGSARMRLSAKFYLVAMFFVIFDVEALYLYAWSISIRESGWIGFIEAAIFILVLLAGLFYLVRIGALDWTPTRSNRRVSKPSTVRYASSHPQDISQELSVAGSQQANESR</sequence>
<protein>
    <recommendedName>
        <fullName evidence="1">NADH-quinone oxidoreductase subunit A</fullName>
        <ecNumber evidence="1">7.1.1.-</ecNumber>
    </recommendedName>
    <alternativeName>
        <fullName evidence="1">NADH dehydrogenase I subunit A</fullName>
    </alternativeName>
    <alternativeName>
        <fullName evidence="1">NDH-1 subunit A</fullName>
    </alternativeName>
    <alternativeName>
        <fullName evidence="1">NUO1</fullName>
    </alternativeName>
</protein>
<gene>
    <name evidence="1" type="primary">nuoA</name>
    <name type="ordered locus">YPA_2047</name>
</gene>
<feature type="chain" id="PRO_5000116061" description="NADH-quinone oxidoreductase subunit A">
    <location>
        <begin position="1"/>
        <end position="166"/>
    </location>
</feature>
<feature type="transmembrane region" description="Helical" evidence="1">
    <location>
        <begin position="16"/>
        <end position="36"/>
    </location>
</feature>
<feature type="transmembrane region" description="Helical" evidence="1">
    <location>
        <begin position="68"/>
        <end position="88"/>
    </location>
</feature>
<feature type="transmembrane region" description="Helical" evidence="1">
    <location>
        <begin position="98"/>
        <end position="118"/>
    </location>
</feature>
<feature type="region of interest" description="Disordered" evidence="2">
    <location>
        <begin position="141"/>
        <end position="166"/>
    </location>
</feature>
<name>NUOA_YERPA</name>
<comment type="function">
    <text evidence="1">NDH-1 shuttles electrons from NADH, via FMN and iron-sulfur (Fe-S) centers, to quinones in the respiratory chain. The immediate electron acceptor for the enzyme in this species is believed to be ubiquinone. Couples the redox reaction to proton translocation (for every two electrons transferred, four hydrogen ions are translocated across the cytoplasmic membrane), and thus conserves the redox energy in a proton gradient.</text>
</comment>
<comment type="catalytic activity">
    <reaction evidence="1">
        <text>a quinone + NADH + 5 H(+)(in) = a quinol + NAD(+) + 4 H(+)(out)</text>
        <dbReference type="Rhea" id="RHEA:57888"/>
        <dbReference type="ChEBI" id="CHEBI:15378"/>
        <dbReference type="ChEBI" id="CHEBI:24646"/>
        <dbReference type="ChEBI" id="CHEBI:57540"/>
        <dbReference type="ChEBI" id="CHEBI:57945"/>
        <dbReference type="ChEBI" id="CHEBI:132124"/>
    </reaction>
</comment>
<comment type="subunit">
    <text evidence="1">NDH-1 is composed of 13 different subunits. Subunits NuoA, H, J, K, L, M, N constitute the membrane sector of the complex.</text>
</comment>
<comment type="subcellular location">
    <subcellularLocation>
        <location evidence="1">Cell inner membrane</location>
        <topology evidence="1">Multi-pass membrane protein</topology>
    </subcellularLocation>
</comment>
<comment type="similarity">
    <text evidence="1">Belongs to the complex I subunit 3 family.</text>
</comment>
<evidence type="ECO:0000255" key="1">
    <source>
        <dbReference type="HAMAP-Rule" id="MF_01394"/>
    </source>
</evidence>
<evidence type="ECO:0000256" key="2">
    <source>
        <dbReference type="SAM" id="MobiDB-lite"/>
    </source>
</evidence>
<proteinExistence type="inferred from homology"/>
<accession>Q1C6A9</accession>
<keyword id="KW-0997">Cell inner membrane</keyword>
<keyword id="KW-1003">Cell membrane</keyword>
<keyword id="KW-0472">Membrane</keyword>
<keyword id="KW-0520">NAD</keyword>
<keyword id="KW-0874">Quinone</keyword>
<keyword id="KW-1278">Translocase</keyword>
<keyword id="KW-0812">Transmembrane</keyword>
<keyword id="KW-1133">Transmembrane helix</keyword>
<keyword id="KW-0813">Transport</keyword>
<keyword id="KW-0830">Ubiquinone</keyword>
<reference key="1">
    <citation type="journal article" date="2006" name="J. Bacteriol.">
        <title>Complete genome sequence of Yersinia pestis strains Antiqua and Nepal516: evidence of gene reduction in an emerging pathogen.</title>
        <authorList>
            <person name="Chain P.S.G."/>
            <person name="Hu P."/>
            <person name="Malfatti S.A."/>
            <person name="Radnedge L."/>
            <person name="Larimer F."/>
            <person name="Vergez L.M."/>
            <person name="Worsham P."/>
            <person name="Chu M.C."/>
            <person name="Andersen G.L."/>
        </authorList>
    </citation>
    <scope>NUCLEOTIDE SEQUENCE [LARGE SCALE GENOMIC DNA]</scope>
    <source>
        <strain>Antiqua</strain>
    </source>
</reference>
<organism>
    <name type="scientific">Yersinia pestis bv. Antiqua (strain Antiqua)</name>
    <dbReference type="NCBI Taxonomy" id="360102"/>
    <lineage>
        <taxon>Bacteria</taxon>
        <taxon>Pseudomonadati</taxon>
        <taxon>Pseudomonadota</taxon>
        <taxon>Gammaproteobacteria</taxon>
        <taxon>Enterobacterales</taxon>
        <taxon>Yersiniaceae</taxon>
        <taxon>Yersinia</taxon>
    </lineage>
</organism>
<dbReference type="EC" id="7.1.1.-" evidence="1"/>
<dbReference type="EMBL" id="CP000308">
    <property type="protein sequence ID" value="ABG14013.1"/>
    <property type="molecule type" value="Genomic_DNA"/>
</dbReference>
<dbReference type="RefSeq" id="WP_002210279.1">
    <property type="nucleotide sequence ID" value="NZ_CP009906.1"/>
</dbReference>
<dbReference type="SMR" id="Q1C6A9"/>
<dbReference type="KEGG" id="ypa:YPA_2047"/>
<dbReference type="Proteomes" id="UP000001971">
    <property type="component" value="Chromosome"/>
</dbReference>
<dbReference type="GO" id="GO:0030964">
    <property type="term" value="C:NADH dehydrogenase complex"/>
    <property type="evidence" value="ECO:0007669"/>
    <property type="project" value="TreeGrafter"/>
</dbReference>
<dbReference type="GO" id="GO:0005886">
    <property type="term" value="C:plasma membrane"/>
    <property type="evidence" value="ECO:0007669"/>
    <property type="project" value="UniProtKB-SubCell"/>
</dbReference>
<dbReference type="GO" id="GO:0008137">
    <property type="term" value="F:NADH dehydrogenase (ubiquinone) activity"/>
    <property type="evidence" value="ECO:0007669"/>
    <property type="project" value="InterPro"/>
</dbReference>
<dbReference type="GO" id="GO:0050136">
    <property type="term" value="F:NADH:ubiquinone reductase (non-electrogenic) activity"/>
    <property type="evidence" value="ECO:0007669"/>
    <property type="project" value="UniProtKB-UniRule"/>
</dbReference>
<dbReference type="GO" id="GO:0048038">
    <property type="term" value="F:quinone binding"/>
    <property type="evidence" value="ECO:0007669"/>
    <property type="project" value="UniProtKB-KW"/>
</dbReference>
<dbReference type="FunFam" id="1.20.58.1610:FF:000003">
    <property type="entry name" value="NADH-quinone oxidoreductase subunit A"/>
    <property type="match status" value="1"/>
</dbReference>
<dbReference type="Gene3D" id="1.20.58.1610">
    <property type="entry name" value="NADH:ubiquinone/plastoquinone oxidoreductase, chain 3"/>
    <property type="match status" value="1"/>
</dbReference>
<dbReference type="HAMAP" id="MF_01394">
    <property type="entry name" value="NDH1_NuoA"/>
    <property type="match status" value="1"/>
</dbReference>
<dbReference type="InterPro" id="IPR023043">
    <property type="entry name" value="NAD(P)H_OxRDtase_bac/plastid"/>
</dbReference>
<dbReference type="InterPro" id="IPR000440">
    <property type="entry name" value="NADH_UbQ/plastoQ_OxRdtase_su3"/>
</dbReference>
<dbReference type="InterPro" id="IPR038430">
    <property type="entry name" value="NDAH_ubi_oxred_su3_sf"/>
</dbReference>
<dbReference type="PANTHER" id="PTHR11058:SF21">
    <property type="entry name" value="NADH-QUINONE OXIDOREDUCTASE SUBUNIT A"/>
    <property type="match status" value="1"/>
</dbReference>
<dbReference type="PANTHER" id="PTHR11058">
    <property type="entry name" value="NADH-UBIQUINONE OXIDOREDUCTASE CHAIN 3"/>
    <property type="match status" value="1"/>
</dbReference>
<dbReference type="Pfam" id="PF00507">
    <property type="entry name" value="Oxidored_q4"/>
    <property type="match status" value="1"/>
</dbReference>